<reference key="1">
    <citation type="journal article" date="2005" name="Nature">
        <title>The map-based sequence of the rice genome.</title>
        <authorList>
            <consortium name="International rice genome sequencing project (IRGSP)"/>
        </authorList>
    </citation>
    <scope>NUCLEOTIDE SEQUENCE [LARGE SCALE GENOMIC DNA]</scope>
    <source>
        <strain>cv. Nipponbare</strain>
    </source>
</reference>
<reference key="2">
    <citation type="journal article" date="2008" name="Nucleic Acids Res.">
        <title>The rice annotation project database (RAP-DB): 2008 update.</title>
        <authorList>
            <consortium name="The rice annotation project (RAP)"/>
        </authorList>
    </citation>
    <scope>GENOME REANNOTATION</scope>
    <source>
        <strain>cv. Nipponbare</strain>
    </source>
</reference>
<reference key="3">
    <citation type="journal article" date="2013" name="Rice">
        <title>Improvement of the Oryza sativa Nipponbare reference genome using next generation sequence and optical map data.</title>
        <authorList>
            <person name="Kawahara Y."/>
            <person name="de la Bastide M."/>
            <person name="Hamilton J.P."/>
            <person name="Kanamori H."/>
            <person name="McCombie W.R."/>
            <person name="Ouyang S."/>
            <person name="Schwartz D.C."/>
            <person name="Tanaka T."/>
            <person name="Wu J."/>
            <person name="Zhou S."/>
            <person name="Childs K.L."/>
            <person name="Davidson R.M."/>
            <person name="Lin H."/>
            <person name="Quesada-Ocampo L."/>
            <person name="Vaillancourt B."/>
            <person name="Sakai H."/>
            <person name="Lee S.S."/>
            <person name="Kim J."/>
            <person name="Numa H."/>
            <person name="Itoh T."/>
            <person name="Buell C.R."/>
            <person name="Matsumoto T."/>
        </authorList>
    </citation>
    <scope>GENOME REANNOTATION</scope>
    <source>
        <strain>cv. Nipponbare</strain>
    </source>
</reference>
<reference key="4">
    <citation type="journal article" date="2005" name="PLoS Biol.">
        <title>The genomes of Oryza sativa: a history of duplications.</title>
        <authorList>
            <person name="Yu J."/>
            <person name="Wang J."/>
            <person name="Lin W."/>
            <person name="Li S."/>
            <person name="Li H."/>
            <person name="Zhou J."/>
            <person name="Ni P."/>
            <person name="Dong W."/>
            <person name="Hu S."/>
            <person name="Zeng C."/>
            <person name="Zhang J."/>
            <person name="Zhang Y."/>
            <person name="Li R."/>
            <person name="Xu Z."/>
            <person name="Li S."/>
            <person name="Li X."/>
            <person name="Zheng H."/>
            <person name="Cong L."/>
            <person name="Lin L."/>
            <person name="Yin J."/>
            <person name="Geng J."/>
            <person name="Li G."/>
            <person name="Shi J."/>
            <person name="Liu J."/>
            <person name="Lv H."/>
            <person name="Li J."/>
            <person name="Wang J."/>
            <person name="Deng Y."/>
            <person name="Ran L."/>
            <person name="Shi X."/>
            <person name="Wang X."/>
            <person name="Wu Q."/>
            <person name="Li C."/>
            <person name="Ren X."/>
            <person name="Wang J."/>
            <person name="Wang X."/>
            <person name="Li D."/>
            <person name="Liu D."/>
            <person name="Zhang X."/>
            <person name="Ji Z."/>
            <person name="Zhao W."/>
            <person name="Sun Y."/>
            <person name="Zhang Z."/>
            <person name="Bao J."/>
            <person name="Han Y."/>
            <person name="Dong L."/>
            <person name="Ji J."/>
            <person name="Chen P."/>
            <person name="Wu S."/>
            <person name="Liu J."/>
            <person name="Xiao Y."/>
            <person name="Bu D."/>
            <person name="Tan J."/>
            <person name="Yang L."/>
            <person name="Ye C."/>
            <person name="Zhang J."/>
            <person name="Xu J."/>
            <person name="Zhou Y."/>
            <person name="Yu Y."/>
            <person name="Zhang B."/>
            <person name="Zhuang S."/>
            <person name="Wei H."/>
            <person name="Liu B."/>
            <person name="Lei M."/>
            <person name="Yu H."/>
            <person name="Li Y."/>
            <person name="Xu H."/>
            <person name="Wei S."/>
            <person name="He X."/>
            <person name="Fang L."/>
            <person name="Zhang Z."/>
            <person name="Zhang Y."/>
            <person name="Huang X."/>
            <person name="Su Z."/>
            <person name="Tong W."/>
            <person name="Li J."/>
            <person name="Tong Z."/>
            <person name="Li S."/>
            <person name="Ye J."/>
            <person name="Wang L."/>
            <person name="Fang L."/>
            <person name="Lei T."/>
            <person name="Chen C.-S."/>
            <person name="Chen H.-C."/>
            <person name="Xu Z."/>
            <person name="Li H."/>
            <person name="Huang H."/>
            <person name="Zhang F."/>
            <person name="Xu H."/>
            <person name="Li N."/>
            <person name="Zhao C."/>
            <person name="Li S."/>
            <person name="Dong L."/>
            <person name="Huang Y."/>
            <person name="Li L."/>
            <person name="Xi Y."/>
            <person name="Qi Q."/>
            <person name="Li W."/>
            <person name="Zhang B."/>
            <person name="Hu W."/>
            <person name="Zhang Y."/>
            <person name="Tian X."/>
            <person name="Jiao Y."/>
            <person name="Liang X."/>
            <person name="Jin J."/>
            <person name="Gao L."/>
            <person name="Zheng W."/>
            <person name="Hao B."/>
            <person name="Liu S.-M."/>
            <person name="Wang W."/>
            <person name="Yuan L."/>
            <person name="Cao M."/>
            <person name="McDermott J."/>
            <person name="Samudrala R."/>
            <person name="Wang J."/>
            <person name="Wong G.K.-S."/>
            <person name="Yang H."/>
        </authorList>
    </citation>
    <scope>NUCLEOTIDE SEQUENCE [LARGE SCALE GENOMIC DNA]</scope>
    <source>
        <strain>cv. Nipponbare</strain>
    </source>
</reference>
<reference key="5">
    <citation type="journal article" date="2003" name="Science">
        <title>Collection, mapping, and annotation of over 28,000 cDNA clones from japonica rice.</title>
        <authorList>
            <consortium name="The rice full-length cDNA consortium"/>
        </authorList>
    </citation>
    <scope>NUCLEOTIDE SEQUENCE [LARGE SCALE MRNA]</scope>
    <source>
        <strain>cv. Nipponbare</strain>
    </source>
</reference>
<keyword id="KW-0256">Endoplasmic reticulum</keyword>
<keyword id="KW-0333">Golgi apparatus</keyword>
<keyword id="KW-0378">Hydrolase</keyword>
<keyword id="KW-0472">Membrane</keyword>
<keyword id="KW-1185">Reference proteome</keyword>
<keyword id="KW-0812">Transmembrane</keyword>
<keyword id="KW-1133">Transmembrane helix</keyword>
<feature type="chain" id="PRO_0000411672" description="Probable isoprenylcysteine alpha-carbonyl methylesterase ICMEL1">
    <location>
        <begin position="1"/>
        <end position="425"/>
    </location>
</feature>
<feature type="transmembrane region" description="Helical" evidence="2">
    <location>
        <begin position="99"/>
        <end position="119"/>
    </location>
</feature>
<feature type="transmembrane region" description="Helical" evidence="2">
    <location>
        <begin position="154"/>
        <end position="174"/>
    </location>
</feature>
<feature type="region of interest" description="Disordered" evidence="3">
    <location>
        <begin position="1"/>
        <end position="42"/>
    </location>
</feature>
<feature type="compositionally biased region" description="Basic and acidic residues" evidence="3">
    <location>
        <begin position="1"/>
        <end position="10"/>
    </location>
</feature>
<feature type="compositionally biased region" description="Low complexity" evidence="3">
    <location>
        <begin position="24"/>
        <end position="34"/>
    </location>
</feature>
<feature type="active site" evidence="4">
    <location>
        <position position="232"/>
    </location>
</feature>
<feature type="active site" evidence="4">
    <location>
        <position position="334"/>
    </location>
</feature>
<feature type="active site" evidence="4">
    <location>
        <position position="366"/>
    </location>
</feature>
<feature type="binding site" evidence="2">
    <location>
        <begin position="160"/>
        <end position="162"/>
    </location>
    <ligand>
        <name>substrate</name>
    </ligand>
</feature>
<feature type="binding site" evidence="2">
    <location>
        <begin position="231"/>
        <end position="233"/>
    </location>
    <ligand>
        <name>substrate</name>
    </ligand>
</feature>
<protein>
    <recommendedName>
        <fullName>Probable isoprenylcysteine alpha-carbonyl methylesterase ICMEL1</fullName>
        <ecNumber>3.1.1.n2</ecNumber>
    </recommendedName>
    <alternativeName>
        <fullName>Isoprenylcysteine methylesterase-like protein 1</fullName>
    </alternativeName>
</protein>
<dbReference type="EC" id="3.1.1.n2"/>
<dbReference type="EMBL" id="AP003621">
    <property type="protein sequence ID" value="BAD53618.1"/>
    <property type="molecule type" value="Genomic_DNA"/>
</dbReference>
<dbReference type="EMBL" id="AP003634">
    <property type="protein sequence ID" value="BAD53625.1"/>
    <property type="molecule type" value="Genomic_DNA"/>
</dbReference>
<dbReference type="EMBL" id="AP008212">
    <property type="protein sequence ID" value="BAF20445.1"/>
    <property type="molecule type" value="Genomic_DNA"/>
</dbReference>
<dbReference type="EMBL" id="AP014962">
    <property type="protein sequence ID" value="BAS99428.1"/>
    <property type="molecule type" value="Genomic_DNA"/>
</dbReference>
<dbReference type="EMBL" id="CM000143">
    <property type="protein sequence ID" value="EAZ38235.1"/>
    <property type="molecule type" value="Genomic_DNA"/>
</dbReference>
<dbReference type="EMBL" id="AK102365">
    <property type="protein sequence ID" value="BAG95517.1"/>
    <property type="molecule type" value="mRNA"/>
</dbReference>
<dbReference type="RefSeq" id="XP_015643069.1">
    <property type="nucleotide sequence ID" value="XM_015787583.1"/>
</dbReference>
<dbReference type="SMR" id="Q5Z9I2"/>
<dbReference type="FunCoup" id="Q5Z9I2">
    <property type="interactions" value="204"/>
</dbReference>
<dbReference type="STRING" id="39947.Q5Z9I2"/>
<dbReference type="ESTHER" id="orysa-q5z9i2">
    <property type="family name" value="BD-FAE"/>
</dbReference>
<dbReference type="PaxDb" id="39947-Q5Z9I2"/>
<dbReference type="EnsemblPlants" id="Os06t0708100-01">
    <property type="protein sequence ID" value="Os06t0708100-01"/>
    <property type="gene ID" value="Os06g0708100"/>
</dbReference>
<dbReference type="Gramene" id="Os06t0708100-01">
    <property type="protein sequence ID" value="Os06t0708100-01"/>
    <property type="gene ID" value="Os06g0708100"/>
</dbReference>
<dbReference type="KEGG" id="dosa:Os06g0708100"/>
<dbReference type="eggNOG" id="KOG1516">
    <property type="taxonomic scope" value="Eukaryota"/>
</dbReference>
<dbReference type="HOGENOM" id="CLU_012494_2_4_1"/>
<dbReference type="InParanoid" id="Q5Z9I2"/>
<dbReference type="OMA" id="MMFKPLI"/>
<dbReference type="OrthoDB" id="6495301at2759"/>
<dbReference type="Proteomes" id="UP000000763">
    <property type="component" value="Chromosome 6"/>
</dbReference>
<dbReference type="Proteomes" id="UP000007752">
    <property type="component" value="Chromosome 6"/>
</dbReference>
<dbReference type="Proteomes" id="UP000059680">
    <property type="component" value="Chromosome 6"/>
</dbReference>
<dbReference type="ExpressionAtlas" id="Q5Z9I2">
    <property type="expression patterns" value="baseline and differential"/>
</dbReference>
<dbReference type="GO" id="GO:0005789">
    <property type="term" value="C:endoplasmic reticulum membrane"/>
    <property type="evidence" value="ECO:0000318"/>
    <property type="project" value="GO_Central"/>
</dbReference>
<dbReference type="GO" id="GO:0000139">
    <property type="term" value="C:Golgi membrane"/>
    <property type="evidence" value="ECO:0000318"/>
    <property type="project" value="GO_Central"/>
</dbReference>
<dbReference type="GO" id="GO:0010296">
    <property type="term" value="F:prenylcysteine methylesterase activity"/>
    <property type="evidence" value="ECO:0000318"/>
    <property type="project" value="GO_Central"/>
</dbReference>
<dbReference type="FunFam" id="3.40.50.1820:FF:000084">
    <property type="entry name" value="Isoprenylcysteine alpha-carbonyl methylesterase ICME"/>
    <property type="match status" value="1"/>
</dbReference>
<dbReference type="Gene3D" id="3.40.50.1820">
    <property type="entry name" value="alpha/beta hydrolase"/>
    <property type="match status" value="1"/>
</dbReference>
<dbReference type="InterPro" id="IPR029058">
    <property type="entry name" value="AB_hydrolase_fold"/>
</dbReference>
<dbReference type="InterPro" id="IPR049492">
    <property type="entry name" value="BD-FAE-like_dom"/>
</dbReference>
<dbReference type="InterPro" id="IPR050300">
    <property type="entry name" value="GDXG_lipolytic_enzyme"/>
</dbReference>
<dbReference type="PANTHER" id="PTHR48081">
    <property type="entry name" value="AB HYDROLASE SUPERFAMILY PROTEIN C4A8.06C"/>
    <property type="match status" value="1"/>
</dbReference>
<dbReference type="PANTHER" id="PTHR48081:SF33">
    <property type="entry name" value="KYNURENINE FORMAMIDASE"/>
    <property type="match status" value="1"/>
</dbReference>
<dbReference type="Pfam" id="PF20434">
    <property type="entry name" value="BD-FAE"/>
    <property type="match status" value="1"/>
</dbReference>
<dbReference type="SUPFAM" id="SSF53474">
    <property type="entry name" value="alpha/beta-Hydrolases"/>
    <property type="match status" value="1"/>
</dbReference>
<organism>
    <name type="scientific">Oryza sativa subsp. japonica</name>
    <name type="common">Rice</name>
    <dbReference type="NCBI Taxonomy" id="39947"/>
    <lineage>
        <taxon>Eukaryota</taxon>
        <taxon>Viridiplantae</taxon>
        <taxon>Streptophyta</taxon>
        <taxon>Embryophyta</taxon>
        <taxon>Tracheophyta</taxon>
        <taxon>Spermatophyta</taxon>
        <taxon>Magnoliopsida</taxon>
        <taxon>Liliopsida</taxon>
        <taxon>Poales</taxon>
        <taxon>Poaceae</taxon>
        <taxon>BOP clade</taxon>
        <taxon>Oryzoideae</taxon>
        <taxon>Oryzeae</taxon>
        <taxon>Oryzinae</taxon>
        <taxon>Oryza</taxon>
        <taxon>Oryza sativa</taxon>
    </lineage>
</organism>
<gene>
    <name type="primary">IMCEL1</name>
    <name type="ordered locus">Os06g0708100</name>
    <name type="ordered locus">LOC_Os06g49440</name>
    <name type="ORF">OsJ_22610</name>
    <name type="ORF">P0621D05.41-1</name>
    <name type="ORF">P0655A07.1-1</name>
</gene>
<comment type="function">
    <text evidence="1">Catalyzes the demethylation of isoprenylcysteine methylesters.</text>
</comment>
<comment type="catalytic activity">
    <reaction>
        <text>[protein]-C-terminal S-[(2E,6E)-farnesyl]-L-cysteine methyl ester + H2O = [protein]-C-terminal S-[(2E,6E)-farnesyl]-L-cysteine + methanol + H(+)</text>
        <dbReference type="Rhea" id="RHEA:48520"/>
        <dbReference type="Rhea" id="RHEA-COMP:12125"/>
        <dbReference type="Rhea" id="RHEA-COMP:12126"/>
        <dbReference type="ChEBI" id="CHEBI:15377"/>
        <dbReference type="ChEBI" id="CHEBI:15378"/>
        <dbReference type="ChEBI" id="CHEBI:17790"/>
        <dbReference type="ChEBI" id="CHEBI:90510"/>
        <dbReference type="ChEBI" id="CHEBI:90511"/>
        <dbReference type="EC" id="3.1.1.n2"/>
    </reaction>
</comment>
<comment type="subcellular location">
    <subcellularLocation>
        <location>Endoplasmic reticulum membrane</location>
    </subcellularLocation>
    <subcellularLocation>
        <location evidence="1">Golgi apparatus membrane</location>
        <topology evidence="1">Multi-pass membrane protein</topology>
    </subcellularLocation>
</comment>
<comment type="similarity">
    <text evidence="4">Belongs to the AB hydrolase superfamily. Isoprenylcysteine methylesterase family.</text>
</comment>
<evidence type="ECO:0000250" key="1"/>
<evidence type="ECO:0000255" key="2"/>
<evidence type="ECO:0000256" key="3">
    <source>
        <dbReference type="SAM" id="MobiDB-lite"/>
    </source>
</evidence>
<evidence type="ECO:0000305" key="4"/>
<sequence length="425" mass="46758">MQVELADRAAARPSETGEAPPSSPAAAAAASAAAEDAPLLPGGGGGVRRRVVVSERFRQRSGSFRREVRRAAEETYLLTRLTLILLRYLGIGYRWIRQFLALCCYTFLLMPGFIQVVYYYFFSSQVCRSVVYGEQPRNRLDLYIPTDRTGLKPVVAFVTGGAWIIGYKGWGALLGRRLAERGILVACIDYRNFPQGTIGDMVEDASQGIAFVCNNIASYGGDPERIYLVGQSAGAHIAACTLLHQAIKESGEGDASTWSIAQLKAYFGISGGYNLLNLVDHFHKRGLYRSIFLSIMEGEESLQKFSPLVMVKDPAARSAVSLLPRIFLFHGTSDYSIPSAESEAFFDALQQNGAKADLFLYDGKTHTDLFLQDPLRGGRDKLLEEIVTVIHNDNPDTSAQHLAVPVARRLVPEFMLMLAGRVSPF</sequence>
<proteinExistence type="evidence at transcript level"/>
<name>IMCL1_ORYSJ</name>
<accession>Q5Z9I2</accession>
<accession>A0A0P0X106</accession>